<evidence type="ECO:0000255" key="1">
    <source>
        <dbReference type="HAMAP-Rule" id="MF_00145"/>
    </source>
</evidence>
<name>PGK_PSEPF</name>
<feature type="chain" id="PRO_1000058042" description="Phosphoglycerate kinase">
    <location>
        <begin position="1"/>
        <end position="387"/>
    </location>
</feature>
<feature type="binding site" evidence="1">
    <location>
        <begin position="21"/>
        <end position="23"/>
    </location>
    <ligand>
        <name>substrate</name>
    </ligand>
</feature>
<feature type="binding site" evidence="1">
    <location>
        <position position="36"/>
    </location>
    <ligand>
        <name>substrate</name>
    </ligand>
</feature>
<feature type="binding site" evidence="1">
    <location>
        <begin position="59"/>
        <end position="62"/>
    </location>
    <ligand>
        <name>substrate</name>
    </ligand>
</feature>
<feature type="binding site" evidence="1">
    <location>
        <position position="113"/>
    </location>
    <ligand>
        <name>substrate</name>
    </ligand>
</feature>
<feature type="binding site" evidence="1">
    <location>
        <position position="146"/>
    </location>
    <ligand>
        <name>substrate</name>
    </ligand>
</feature>
<feature type="binding site" evidence="1">
    <location>
        <position position="197"/>
    </location>
    <ligand>
        <name>ATP</name>
        <dbReference type="ChEBI" id="CHEBI:30616"/>
    </ligand>
</feature>
<feature type="binding site" evidence="1">
    <location>
        <position position="314"/>
    </location>
    <ligand>
        <name>ATP</name>
        <dbReference type="ChEBI" id="CHEBI:30616"/>
    </ligand>
</feature>
<feature type="binding site" evidence="1">
    <location>
        <begin position="340"/>
        <end position="343"/>
    </location>
    <ligand>
        <name>ATP</name>
        <dbReference type="ChEBI" id="CHEBI:30616"/>
    </ligand>
</feature>
<keyword id="KW-0067">ATP-binding</keyword>
<keyword id="KW-0963">Cytoplasm</keyword>
<keyword id="KW-0324">Glycolysis</keyword>
<keyword id="KW-0418">Kinase</keyword>
<keyword id="KW-0547">Nucleotide-binding</keyword>
<keyword id="KW-0808">Transferase</keyword>
<comment type="catalytic activity">
    <reaction evidence="1">
        <text>(2R)-3-phosphoglycerate + ATP = (2R)-3-phospho-glyceroyl phosphate + ADP</text>
        <dbReference type="Rhea" id="RHEA:14801"/>
        <dbReference type="ChEBI" id="CHEBI:30616"/>
        <dbReference type="ChEBI" id="CHEBI:57604"/>
        <dbReference type="ChEBI" id="CHEBI:58272"/>
        <dbReference type="ChEBI" id="CHEBI:456216"/>
        <dbReference type="EC" id="2.7.2.3"/>
    </reaction>
</comment>
<comment type="pathway">
    <text evidence="1">Carbohydrate degradation; glycolysis; pyruvate from D-glyceraldehyde 3-phosphate: step 2/5.</text>
</comment>
<comment type="subunit">
    <text evidence="1">Monomer.</text>
</comment>
<comment type="subcellular location">
    <subcellularLocation>
        <location evidence="1">Cytoplasm</location>
    </subcellularLocation>
</comment>
<comment type="similarity">
    <text evidence="1">Belongs to the phosphoglycerate kinase family.</text>
</comment>
<proteinExistence type="inferred from homology"/>
<sequence>MTVLKMSDLDLQGKRVLIREDLNVPVKDGVVTSDARILASLPTIKLALEKGAAVMVCSHLGRPTEGEFSAENSLKPVADYLSKALGREVPLVADYLGGVDVKAGDIVLFENVRFNKGEKKNADELAQQYAALCDVFVMDAFGTAHRAEGSTHGVAKFAKVAAAGPLLAAELDALGKALGAPAKPMAAIVAGSKVSTKLDVLNSLSQICDQLIVGGGIANTFLAAAGHPVGKSLYEPDLLDTARAIAAKVSVPLPVDVVVAKEFAESAEATVKLIADVAADDMILDIGPQTAANFAELLKSSKTILWNGPVGVFEFDQFGNGTKVLAEAIAESAAFSIAGGGDTLAAIDKYGVAEKISYISTGGGAFLEFVEGKVLPAVEVLESRAKA</sequence>
<gene>
    <name evidence="1" type="primary">pgk</name>
    <name type="ordered locus">Pfl01_5265</name>
</gene>
<reference key="1">
    <citation type="journal article" date="2009" name="Genome Biol.">
        <title>Genomic and genetic analyses of diversity and plant interactions of Pseudomonas fluorescens.</title>
        <authorList>
            <person name="Silby M.W."/>
            <person name="Cerdeno-Tarraga A.M."/>
            <person name="Vernikos G.S."/>
            <person name="Giddens S.R."/>
            <person name="Jackson R.W."/>
            <person name="Preston G.M."/>
            <person name="Zhang X.-X."/>
            <person name="Moon C.D."/>
            <person name="Gehrig S.M."/>
            <person name="Godfrey S.A.C."/>
            <person name="Knight C.G."/>
            <person name="Malone J.G."/>
            <person name="Robinson Z."/>
            <person name="Spiers A.J."/>
            <person name="Harris S."/>
            <person name="Challis G.L."/>
            <person name="Yaxley A.M."/>
            <person name="Harris D."/>
            <person name="Seeger K."/>
            <person name="Murphy L."/>
            <person name="Rutter S."/>
            <person name="Squares R."/>
            <person name="Quail M.A."/>
            <person name="Saunders E."/>
            <person name="Mavromatis K."/>
            <person name="Brettin T.S."/>
            <person name="Bentley S.D."/>
            <person name="Hothersall J."/>
            <person name="Stephens E."/>
            <person name="Thomas C.M."/>
            <person name="Parkhill J."/>
            <person name="Levy S.B."/>
            <person name="Rainey P.B."/>
            <person name="Thomson N.R."/>
        </authorList>
    </citation>
    <scope>NUCLEOTIDE SEQUENCE [LARGE SCALE GENOMIC DNA]</scope>
    <source>
        <strain>Pf0-1</strain>
    </source>
</reference>
<dbReference type="EC" id="2.7.2.3" evidence="1"/>
<dbReference type="EMBL" id="CP000094">
    <property type="protein sequence ID" value="ABA77002.1"/>
    <property type="molecule type" value="Genomic_DNA"/>
</dbReference>
<dbReference type="RefSeq" id="WP_011336326.1">
    <property type="nucleotide sequence ID" value="NC_007492.2"/>
</dbReference>
<dbReference type="SMR" id="Q3K5F2"/>
<dbReference type="KEGG" id="pfo:Pfl01_5265"/>
<dbReference type="eggNOG" id="COG0126">
    <property type="taxonomic scope" value="Bacteria"/>
</dbReference>
<dbReference type="HOGENOM" id="CLU_025427_0_2_6"/>
<dbReference type="UniPathway" id="UPA00109">
    <property type="reaction ID" value="UER00185"/>
</dbReference>
<dbReference type="Proteomes" id="UP000002704">
    <property type="component" value="Chromosome"/>
</dbReference>
<dbReference type="GO" id="GO:0005829">
    <property type="term" value="C:cytosol"/>
    <property type="evidence" value="ECO:0007669"/>
    <property type="project" value="TreeGrafter"/>
</dbReference>
<dbReference type="GO" id="GO:0043531">
    <property type="term" value="F:ADP binding"/>
    <property type="evidence" value="ECO:0007669"/>
    <property type="project" value="TreeGrafter"/>
</dbReference>
<dbReference type="GO" id="GO:0005524">
    <property type="term" value="F:ATP binding"/>
    <property type="evidence" value="ECO:0007669"/>
    <property type="project" value="UniProtKB-KW"/>
</dbReference>
<dbReference type="GO" id="GO:0004618">
    <property type="term" value="F:phosphoglycerate kinase activity"/>
    <property type="evidence" value="ECO:0007669"/>
    <property type="project" value="UniProtKB-UniRule"/>
</dbReference>
<dbReference type="GO" id="GO:0006094">
    <property type="term" value="P:gluconeogenesis"/>
    <property type="evidence" value="ECO:0007669"/>
    <property type="project" value="TreeGrafter"/>
</dbReference>
<dbReference type="GO" id="GO:0006096">
    <property type="term" value="P:glycolytic process"/>
    <property type="evidence" value="ECO:0007669"/>
    <property type="project" value="UniProtKB-UniRule"/>
</dbReference>
<dbReference type="FunFam" id="3.40.50.1260:FF:000001">
    <property type="entry name" value="Phosphoglycerate kinase"/>
    <property type="match status" value="1"/>
</dbReference>
<dbReference type="FunFam" id="3.40.50.1260:FF:000002">
    <property type="entry name" value="Phosphoglycerate kinase"/>
    <property type="match status" value="1"/>
</dbReference>
<dbReference type="Gene3D" id="3.40.50.1260">
    <property type="entry name" value="Phosphoglycerate kinase, N-terminal domain"/>
    <property type="match status" value="2"/>
</dbReference>
<dbReference type="HAMAP" id="MF_00145">
    <property type="entry name" value="Phosphoglyc_kinase"/>
    <property type="match status" value="1"/>
</dbReference>
<dbReference type="InterPro" id="IPR001576">
    <property type="entry name" value="Phosphoglycerate_kinase"/>
</dbReference>
<dbReference type="InterPro" id="IPR015911">
    <property type="entry name" value="Phosphoglycerate_kinase_CS"/>
</dbReference>
<dbReference type="InterPro" id="IPR015824">
    <property type="entry name" value="Phosphoglycerate_kinase_N"/>
</dbReference>
<dbReference type="InterPro" id="IPR036043">
    <property type="entry name" value="Phosphoglycerate_kinase_sf"/>
</dbReference>
<dbReference type="PANTHER" id="PTHR11406">
    <property type="entry name" value="PHOSPHOGLYCERATE KINASE"/>
    <property type="match status" value="1"/>
</dbReference>
<dbReference type="PANTHER" id="PTHR11406:SF23">
    <property type="entry name" value="PHOSPHOGLYCERATE KINASE 1, CHLOROPLASTIC-RELATED"/>
    <property type="match status" value="1"/>
</dbReference>
<dbReference type="Pfam" id="PF00162">
    <property type="entry name" value="PGK"/>
    <property type="match status" value="1"/>
</dbReference>
<dbReference type="PIRSF" id="PIRSF000724">
    <property type="entry name" value="Pgk"/>
    <property type="match status" value="1"/>
</dbReference>
<dbReference type="PRINTS" id="PR00477">
    <property type="entry name" value="PHGLYCKINASE"/>
</dbReference>
<dbReference type="SUPFAM" id="SSF53748">
    <property type="entry name" value="Phosphoglycerate kinase"/>
    <property type="match status" value="1"/>
</dbReference>
<dbReference type="PROSITE" id="PS00111">
    <property type="entry name" value="PGLYCERATE_KINASE"/>
    <property type="match status" value="1"/>
</dbReference>
<protein>
    <recommendedName>
        <fullName evidence="1">Phosphoglycerate kinase</fullName>
        <ecNumber evidence="1">2.7.2.3</ecNumber>
    </recommendedName>
</protein>
<organism>
    <name type="scientific">Pseudomonas fluorescens (strain Pf0-1)</name>
    <dbReference type="NCBI Taxonomy" id="205922"/>
    <lineage>
        <taxon>Bacteria</taxon>
        <taxon>Pseudomonadati</taxon>
        <taxon>Pseudomonadota</taxon>
        <taxon>Gammaproteobacteria</taxon>
        <taxon>Pseudomonadales</taxon>
        <taxon>Pseudomonadaceae</taxon>
        <taxon>Pseudomonas</taxon>
    </lineage>
</organism>
<accession>Q3K5F2</accession>